<reference key="1">
    <citation type="journal article" date="2011" name="J. Bacteriol.">
        <title>Whole-genome sequences of thirteen isolates of Borrelia burgdorferi.</title>
        <authorList>
            <person name="Schutzer S.E."/>
            <person name="Fraser-Liggett C.M."/>
            <person name="Casjens S.R."/>
            <person name="Qiu W.G."/>
            <person name="Dunn J.J."/>
            <person name="Mongodin E.F."/>
            <person name="Luft B.J."/>
        </authorList>
    </citation>
    <scope>NUCLEOTIDE SEQUENCE [LARGE SCALE GENOMIC DNA]</scope>
    <source>
        <strain>ZS7</strain>
    </source>
</reference>
<sequence length="445" mass="52237">MVRMEDIISLAKRKGFVFQSSEVYGGLSGAWDYGPLGVELKKNIKKEWWKSMVYLHENIVGLDSAIFMRPEIWRASGHVDGFSDSMVDCKDCKSRFRADFIDLSKNCPNCKVGNNFTSPRSFNLMFKTHIGVVEDSSSEVYLRPETAQGIFVNFRNVLDSSRLKIPFGIAQVGKAFRNEIVTKNFIFRTCEFEQMEMQFFVHPKQIDEWFCYWQQNRMNFFIETLKISPDRLRFKAHDSTQLAHYAKAAFDIEYEFPFGFQEVEGIHNRGNYDLTQHAKFSNKPKVFEYHDLLTKEKYVPYVIETSAGLTRSVLMTLCDAYSEEELSDGDKRIVLRLHPKLAPYKIAIFPLVKKVELTEIARRIYMELCDDFHIFYDDSGTIGKRYRRQDEIGTPYCVTIDYNTIEDETVTVRERNNMTQKRIFINDLYSYIKTEILNYKEDFNK</sequence>
<gene>
    <name evidence="1" type="primary">glyQS</name>
    <name type="ordered locus">BbuZS7_0373</name>
</gene>
<keyword id="KW-0030">Aminoacyl-tRNA synthetase</keyword>
<keyword id="KW-0067">ATP-binding</keyword>
<keyword id="KW-0963">Cytoplasm</keyword>
<keyword id="KW-0436">Ligase</keyword>
<keyword id="KW-0547">Nucleotide-binding</keyword>
<keyword id="KW-0648">Protein biosynthesis</keyword>
<accession>B7J1U3</accession>
<name>SYG_BORBZ</name>
<evidence type="ECO:0000255" key="1">
    <source>
        <dbReference type="HAMAP-Rule" id="MF_00253"/>
    </source>
</evidence>
<proteinExistence type="inferred from homology"/>
<dbReference type="EC" id="6.1.1.14" evidence="1"/>
<dbReference type="EMBL" id="CP001205">
    <property type="protein sequence ID" value="ACK74780.1"/>
    <property type="molecule type" value="Genomic_DNA"/>
</dbReference>
<dbReference type="RefSeq" id="WP_002657829.1">
    <property type="nucleotide sequence ID" value="NC_011728.1"/>
</dbReference>
<dbReference type="SMR" id="B7J1U3"/>
<dbReference type="GeneID" id="56567799"/>
<dbReference type="KEGG" id="bbz:BbuZS7_0373"/>
<dbReference type="HOGENOM" id="CLU_015515_2_1_12"/>
<dbReference type="Proteomes" id="UP000006901">
    <property type="component" value="Chromosome"/>
</dbReference>
<dbReference type="GO" id="GO:0005737">
    <property type="term" value="C:cytoplasm"/>
    <property type="evidence" value="ECO:0007669"/>
    <property type="project" value="UniProtKB-SubCell"/>
</dbReference>
<dbReference type="GO" id="GO:0005524">
    <property type="term" value="F:ATP binding"/>
    <property type="evidence" value="ECO:0007669"/>
    <property type="project" value="UniProtKB-UniRule"/>
</dbReference>
<dbReference type="GO" id="GO:0004820">
    <property type="term" value="F:glycine-tRNA ligase activity"/>
    <property type="evidence" value="ECO:0000250"/>
    <property type="project" value="UniProtKB"/>
</dbReference>
<dbReference type="GO" id="GO:0046983">
    <property type="term" value="F:protein dimerization activity"/>
    <property type="evidence" value="ECO:0000250"/>
    <property type="project" value="UniProtKB"/>
</dbReference>
<dbReference type="GO" id="GO:0006426">
    <property type="term" value="P:glycyl-tRNA aminoacylation"/>
    <property type="evidence" value="ECO:0007669"/>
    <property type="project" value="UniProtKB-UniRule"/>
</dbReference>
<dbReference type="CDD" id="cd00774">
    <property type="entry name" value="GlyRS-like_core"/>
    <property type="match status" value="1"/>
</dbReference>
<dbReference type="CDD" id="cd00858">
    <property type="entry name" value="GlyRS_anticodon"/>
    <property type="match status" value="1"/>
</dbReference>
<dbReference type="FunFam" id="3.30.930.10:FF:000014">
    <property type="entry name" value="Glycine--tRNA ligase"/>
    <property type="match status" value="1"/>
</dbReference>
<dbReference type="FunFam" id="3.40.50.800:FF:000002">
    <property type="entry name" value="Glycine--tRNA ligase"/>
    <property type="match status" value="1"/>
</dbReference>
<dbReference type="Gene3D" id="3.40.50.800">
    <property type="entry name" value="Anticodon-binding domain"/>
    <property type="match status" value="1"/>
</dbReference>
<dbReference type="Gene3D" id="3.30.930.10">
    <property type="entry name" value="Bira Bifunctional Protein, Domain 2"/>
    <property type="match status" value="1"/>
</dbReference>
<dbReference type="HAMAP" id="MF_00253_B">
    <property type="entry name" value="Gly_tRNA_synth_B"/>
    <property type="match status" value="1"/>
</dbReference>
<dbReference type="InterPro" id="IPR002314">
    <property type="entry name" value="aa-tRNA-synt_IIb"/>
</dbReference>
<dbReference type="InterPro" id="IPR006195">
    <property type="entry name" value="aa-tRNA-synth_II"/>
</dbReference>
<dbReference type="InterPro" id="IPR045864">
    <property type="entry name" value="aa-tRNA-synth_II/BPL/LPL"/>
</dbReference>
<dbReference type="InterPro" id="IPR004154">
    <property type="entry name" value="Anticodon-bd"/>
</dbReference>
<dbReference type="InterPro" id="IPR036621">
    <property type="entry name" value="Anticodon-bd_dom_sf"/>
</dbReference>
<dbReference type="InterPro" id="IPR027031">
    <property type="entry name" value="Gly-tRNA_synthase/POLG2"/>
</dbReference>
<dbReference type="InterPro" id="IPR022961">
    <property type="entry name" value="Gly_tRNA_ligase_bac"/>
</dbReference>
<dbReference type="InterPro" id="IPR033731">
    <property type="entry name" value="GlyRS-like_core"/>
</dbReference>
<dbReference type="InterPro" id="IPR002315">
    <property type="entry name" value="tRNA-synt_gly"/>
</dbReference>
<dbReference type="NCBIfam" id="TIGR00389">
    <property type="entry name" value="glyS_dimeric"/>
    <property type="match status" value="1"/>
</dbReference>
<dbReference type="NCBIfam" id="NF003211">
    <property type="entry name" value="PRK04173.1"/>
    <property type="match status" value="1"/>
</dbReference>
<dbReference type="PANTHER" id="PTHR10745:SF8">
    <property type="entry name" value="DNA POLYMERASE SUBUNIT GAMMA-2, MITOCHONDRIAL"/>
    <property type="match status" value="1"/>
</dbReference>
<dbReference type="PANTHER" id="PTHR10745">
    <property type="entry name" value="GLYCYL-TRNA SYNTHETASE/DNA POLYMERASE SUBUNIT GAMMA-2"/>
    <property type="match status" value="1"/>
</dbReference>
<dbReference type="Pfam" id="PF03129">
    <property type="entry name" value="HGTP_anticodon"/>
    <property type="match status" value="1"/>
</dbReference>
<dbReference type="Pfam" id="PF00587">
    <property type="entry name" value="tRNA-synt_2b"/>
    <property type="match status" value="1"/>
</dbReference>
<dbReference type="PRINTS" id="PR01043">
    <property type="entry name" value="TRNASYNTHGLY"/>
</dbReference>
<dbReference type="SUPFAM" id="SSF52954">
    <property type="entry name" value="Class II aaRS ABD-related"/>
    <property type="match status" value="1"/>
</dbReference>
<dbReference type="SUPFAM" id="SSF55681">
    <property type="entry name" value="Class II aaRS and biotin synthetases"/>
    <property type="match status" value="1"/>
</dbReference>
<dbReference type="PROSITE" id="PS50862">
    <property type="entry name" value="AA_TRNA_LIGASE_II"/>
    <property type="match status" value="1"/>
</dbReference>
<feature type="chain" id="PRO_1000197227" description="Glycine--tRNA ligase">
    <location>
        <begin position="1"/>
        <end position="445"/>
    </location>
</feature>
<feature type="binding site" evidence="1">
    <location>
        <position position="97"/>
    </location>
    <ligand>
        <name>substrate</name>
    </ligand>
</feature>
<feature type="binding site" evidence="1">
    <location>
        <position position="145"/>
    </location>
    <ligand>
        <name>substrate</name>
    </ligand>
</feature>
<feature type="binding site" evidence="1">
    <location>
        <begin position="177"/>
        <end position="179"/>
    </location>
    <ligand>
        <name>ATP</name>
        <dbReference type="ChEBI" id="CHEBI:30616"/>
    </ligand>
</feature>
<feature type="binding site" evidence="1">
    <location>
        <begin position="187"/>
        <end position="192"/>
    </location>
    <ligand>
        <name>ATP</name>
        <dbReference type="ChEBI" id="CHEBI:30616"/>
    </ligand>
</feature>
<feature type="binding site" evidence="1">
    <location>
        <begin position="192"/>
        <end position="196"/>
    </location>
    <ligand>
        <name>substrate</name>
    </ligand>
</feature>
<feature type="binding site" evidence="1">
    <location>
        <begin position="262"/>
        <end position="263"/>
    </location>
    <ligand>
        <name>ATP</name>
        <dbReference type="ChEBI" id="CHEBI:30616"/>
    </ligand>
</feature>
<feature type="binding site" evidence="1">
    <location>
        <begin position="304"/>
        <end position="308"/>
    </location>
    <ligand>
        <name>substrate</name>
    </ligand>
</feature>
<feature type="binding site" evidence="1">
    <location>
        <begin position="308"/>
        <end position="311"/>
    </location>
    <ligand>
        <name>ATP</name>
        <dbReference type="ChEBI" id="CHEBI:30616"/>
    </ligand>
</feature>
<organism>
    <name type="scientific">Borreliella burgdorferi (strain ZS7)</name>
    <name type="common">Borrelia burgdorferi</name>
    <dbReference type="NCBI Taxonomy" id="445985"/>
    <lineage>
        <taxon>Bacteria</taxon>
        <taxon>Pseudomonadati</taxon>
        <taxon>Spirochaetota</taxon>
        <taxon>Spirochaetia</taxon>
        <taxon>Spirochaetales</taxon>
        <taxon>Borreliaceae</taxon>
        <taxon>Borreliella</taxon>
    </lineage>
</organism>
<comment type="function">
    <text evidence="1">Catalyzes the attachment of glycine to tRNA(Gly).</text>
</comment>
<comment type="catalytic activity">
    <reaction evidence="1">
        <text>tRNA(Gly) + glycine + ATP = glycyl-tRNA(Gly) + AMP + diphosphate</text>
        <dbReference type="Rhea" id="RHEA:16013"/>
        <dbReference type="Rhea" id="RHEA-COMP:9664"/>
        <dbReference type="Rhea" id="RHEA-COMP:9683"/>
        <dbReference type="ChEBI" id="CHEBI:30616"/>
        <dbReference type="ChEBI" id="CHEBI:33019"/>
        <dbReference type="ChEBI" id="CHEBI:57305"/>
        <dbReference type="ChEBI" id="CHEBI:78442"/>
        <dbReference type="ChEBI" id="CHEBI:78522"/>
        <dbReference type="ChEBI" id="CHEBI:456215"/>
        <dbReference type="EC" id="6.1.1.14"/>
    </reaction>
</comment>
<comment type="subunit">
    <text evidence="1">Homodimer.</text>
</comment>
<comment type="subcellular location">
    <subcellularLocation>
        <location evidence="1">Cytoplasm</location>
    </subcellularLocation>
</comment>
<comment type="similarity">
    <text evidence="1">Belongs to the class-II aminoacyl-tRNA synthetase family.</text>
</comment>
<protein>
    <recommendedName>
        <fullName evidence="1">Glycine--tRNA ligase</fullName>
        <ecNumber evidence="1">6.1.1.14</ecNumber>
    </recommendedName>
    <alternativeName>
        <fullName evidence="1">Glycyl-tRNA synthetase</fullName>
        <shortName evidence="1">GlyRS</shortName>
    </alternativeName>
</protein>